<keyword id="KW-0560">Oxidoreductase</keyword>
<proteinExistence type="inferred from homology"/>
<dbReference type="EC" id="1.8.4.11" evidence="1"/>
<dbReference type="EMBL" id="AE017220">
    <property type="protein sequence ID" value="AAX68189.1"/>
    <property type="molecule type" value="Genomic_DNA"/>
</dbReference>
<dbReference type="RefSeq" id="WP_001541390.1">
    <property type="nucleotide sequence ID" value="NC_006905.1"/>
</dbReference>
<dbReference type="SMR" id="Q57GH3"/>
<dbReference type="KEGG" id="sec:SCH_4283"/>
<dbReference type="HOGENOM" id="CLU_031040_10_3_6"/>
<dbReference type="Proteomes" id="UP000000538">
    <property type="component" value="Chromosome"/>
</dbReference>
<dbReference type="GO" id="GO:0005737">
    <property type="term" value="C:cytoplasm"/>
    <property type="evidence" value="ECO:0007669"/>
    <property type="project" value="TreeGrafter"/>
</dbReference>
<dbReference type="GO" id="GO:0036456">
    <property type="term" value="F:L-methionine-(S)-S-oxide reductase activity"/>
    <property type="evidence" value="ECO:0007669"/>
    <property type="project" value="TreeGrafter"/>
</dbReference>
<dbReference type="GO" id="GO:0008113">
    <property type="term" value="F:peptide-methionine (S)-S-oxide reductase activity"/>
    <property type="evidence" value="ECO:0007669"/>
    <property type="project" value="UniProtKB-UniRule"/>
</dbReference>
<dbReference type="GO" id="GO:0034599">
    <property type="term" value="P:cellular response to oxidative stress"/>
    <property type="evidence" value="ECO:0007669"/>
    <property type="project" value="TreeGrafter"/>
</dbReference>
<dbReference type="GO" id="GO:0036211">
    <property type="term" value="P:protein modification process"/>
    <property type="evidence" value="ECO:0007669"/>
    <property type="project" value="UniProtKB-UniRule"/>
</dbReference>
<dbReference type="FunFam" id="3.30.1060.10:FF:000001">
    <property type="entry name" value="Peptide methionine sulfoxide reductase MsrA"/>
    <property type="match status" value="1"/>
</dbReference>
<dbReference type="Gene3D" id="3.30.1060.10">
    <property type="entry name" value="Peptide methionine sulphoxide reductase MsrA"/>
    <property type="match status" value="1"/>
</dbReference>
<dbReference type="HAMAP" id="MF_01401">
    <property type="entry name" value="MsrA"/>
    <property type="match status" value="1"/>
</dbReference>
<dbReference type="InterPro" id="IPR002569">
    <property type="entry name" value="Met_Sox_Rdtase_MsrA_dom"/>
</dbReference>
<dbReference type="InterPro" id="IPR036509">
    <property type="entry name" value="Met_Sox_Rdtase_MsrA_sf"/>
</dbReference>
<dbReference type="InterPro" id="IPR050162">
    <property type="entry name" value="MsrA_MetSO_reductase"/>
</dbReference>
<dbReference type="NCBIfam" id="TIGR00401">
    <property type="entry name" value="msrA"/>
    <property type="match status" value="1"/>
</dbReference>
<dbReference type="PANTHER" id="PTHR42799">
    <property type="entry name" value="MITOCHONDRIAL PEPTIDE METHIONINE SULFOXIDE REDUCTASE"/>
    <property type="match status" value="1"/>
</dbReference>
<dbReference type="PANTHER" id="PTHR42799:SF2">
    <property type="entry name" value="MITOCHONDRIAL PEPTIDE METHIONINE SULFOXIDE REDUCTASE"/>
    <property type="match status" value="1"/>
</dbReference>
<dbReference type="Pfam" id="PF01625">
    <property type="entry name" value="PMSR"/>
    <property type="match status" value="1"/>
</dbReference>
<dbReference type="SUPFAM" id="SSF55068">
    <property type="entry name" value="Peptide methionine sulfoxide reductase"/>
    <property type="match status" value="1"/>
</dbReference>
<comment type="function">
    <text evidence="1">Has an important function as a repair enzyme for proteins that have been inactivated by oxidation. Catalyzes the reversible oxidation-reduction of methionine sulfoxide in proteins to methionine.</text>
</comment>
<comment type="catalytic activity">
    <reaction evidence="1">
        <text>L-methionyl-[protein] + [thioredoxin]-disulfide + H2O = L-methionyl-(S)-S-oxide-[protein] + [thioredoxin]-dithiol</text>
        <dbReference type="Rhea" id="RHEA:14217"/>
        <dbReference type="Rhea" id="RHEA-COMP:10698"/>
        <dbReference type="Rhea" id="RHEA-COMP:10700"/>
        <dbReference type="Rhea" id="RHEA-COMP:12313"/>
        <dbReference type="Rhea" id="RHEA-COMP:12315"/>
        <dbReference type="ChEBI" id="CHEBI:15377"/>
        <dbReference type="ChEBI" id="CHEBI:16044"/>
        <dbReference type="ChEBI" id="CHEBI:29950"/>
        <dbReference type="ChEBI" id="CHEBI:44120"/>
        <dbReference type="ChEBI" id="CHEBI:50058"/>
        <dbReference type="EC" id="1.8.4.11"/>
    </reaction>
</comment>
<comment type="catalytic activity">
    <reaction evidence="1">
        <text>[thioredoxin]-disulfide + L-methionine + H2O = L-methionine (S)-S-oxide + [thioredoxin]-dithiol</text>
        <dbReference type="Rhea" id="RHEA:19993"/>
        <dbReference type="Rhea" id="RHEA-COMP:10698"/>
        <dbReference type="Rhea" id="RHEA-COMP:10700"/>
        <dbReference type="ChEBI" id="CHEBI:15377"/>
        <dbReference type="ChEBI" id="CHEBI:29950"/>
        <dbReference type="ChEBI" id="CHEBI:50058"/>
        <dbReference type="ChEBI" id="CHEBI:57844"/>
        <dbReference type="ChEBI" id="CHEBI:58772"/>
        <dbReference type="EC" id="1.8.4.11"/>
    </reaction>
</comment>
<comment type="similarity">
    <text evidence="1">Belongs to the MsrA Met sulfoxide reductase family.</text>
</comment>
<sequence>MNLFDKKHLVTQADALPGRNTPMPIATLHAVNEHSMTNVPAGMEIAYFAMGCFWGVERLFWQLPGVYSTAAGYAGGYTPNPTYREVCSGQTGHAEAVRIVYDPAVIRYEQLLQTFWENHDPTQGMQQGNDHGTQYRSAIYPLTPEQNAAAHASRERFQSAMAAAGDHRPITTEIAHATPFYYAEDEHQQYLHKNPYGYCGIGGIGVCLPPDA</sequence>
<accession>Q57GH3</accession>
<evidence type="ECO:0000255" key="1">
    <source>
        <dbReference type="HAMAP-Rule" id="MF_01401"/>
    </source>
</evidence>
<gene>
    <name evidence="1" type="primary">msrA</name>
    <name type="ordered locus">SCH_4283</name>
</gene>
<name>MSRA_SALCH</name>
<feature type="chain" id="PRO_1000068357" description="Peptide methionine sulfoxide reductase MsrA">
    <location>
        <begin position="1"/>
        <end position="212"/>
    </location>
</feature>
<feature type="active site" evidence="1">
    <location>
        <position position="52"/>
    </location>
</feature>
<protein>
    <recommendedName>
        <fullName evidence="1">Peptide methionine sulfoxide reductase MsrA</fullName>
        <shortName evidence="1">Protein-methionine-S-oxide reductase</shortName>
        <ecNumber evidence="1">1.8.4.11</ecNumber>
    </recommendedName>
    <alternativeName>
        <fullName evidence="1">Peptide-methionine (S)-S-oxide reductase</fullName>
        <shortName evidence="1">Peptide Met(O) reductase</shortName>
    </alternativeName>
</protein>
<reference key="1">
    <citation type="journal article" date="2005" name="Nucleic Acids Res.">
        <title>The genome sequence of Salmonella enterica serovar Choleraesuis, a highly invasive and resistant zoonotic pathogen.</title>
        <authorList>
            <person name="Chiu C.-H."/>
            <person name="Tang P."/>
            <person name="Chu C."/>
            <person name="Hu S."/>
            <person name="Bao Q."/>
            <person name="Yu J."/>
            <person name="Chou Y.-Y."/>
            <person name="Wang H.-S."/>
            <person name="Lee Y.-S."/>
        </authorList>
    </citation>
    <scope>NUCLEOTIDE SEQUENCE [LARGE SCALE GENOMIC DNA]</scope>
    <source>
        <strain>SC-B67</strain>
    </source>
</reference>
<organism>
    <name type="scientific">Salmonella choleraesuis (strain SC-B67)</name>
    <dbReference type="NCBI Taxonomy" id="321314"/>
    <lineage>
        <taxon>Bacteria</taxon>
        <taxon>Pseudomonadati</taxon>
        <taxon>Pseudomonadota</taxon>
        <taxon>Gammaproteobacteria</taxon>
        <taxon>Enterobacterales</taxon>
        <taxon>Enterobacteriaceae</taxon>
        <taxon>Salmonella</taxon>
    </lineage>
</organism>